<keyword id="KW-0285">Flavoprotein</keyword>
<keyword id="KW-0288">FMN</keyword>
<keyword id="KW-0520">NAD</keyword>
<keyword id="KW-0521">NADP</keyword>
<keyword id="KW-0547">Nucleotide-binding</keyword>
<keyword id="KW-0560">Oxidoreductase</keyword>
<keyword id="KW-1185">Reference proteome</keyword>
<organism>
    <name type="scientific">Acidovorax ebreus (strain TPSY)</name>
    <name type="common">Diaphorobacter sp. (strain TPSY)</name>
    <dbReference type="NCBI Taxonomy" id="535289"/>
    <lineage>
        <taxon>Bacteria</taxon>
        <taxon>Pseudomonadati</taxon>
        <taxon>Pseudomonadota</taxon>
        <taxon>Betaproteobacteria</taxon>
        <taxon>Burkholderiales</taxon>
        <taxon>Comamonadaceae</taxon>
        <taxon>Diaphorobacter</taxon>
    </lineage>
</organism>
<gene>
    <name type="ordered locus">Dtpsy_0057</name>
</gene>
<accession>B9M9X5</accession>
<sequence>MSKVLVLYYSTYGHLETMAQAVAEGARSAGATVDVKRVPETVPQEIARSAHFKLDQSAPVATVTELENYDAIIVGAPTRFGRMPSQMGSFLDQAGGLWARGALNGKVGAAFTSTATQHGGQETTLFSIITNLLHFGMVIVGLPYSFQGQMTLDEVVGGAPYGATTIAGGQGQRQPSATELDGARFQGRLVAETANKLFGG</sequence>
<evidence type="ECO:0000255" key="1">
    <source>
        <dbReference type="HAMAP-Rule" id="MF_01017"/>
    </source>
</evidence>
<protein>
    <recommendedName>
        <fullName evidence="1">NAD(P)H dehydrogenase (quinone)</fullName>
        <ecNumber evidence="1">1.6.5.2</ecNumber>
    </recommendedName>
    <alternativeName>
        <fullName>Flavoprotein WrbA</fullName>
    </alternativeName>
    <alternativeName>
        <fullName evidence="1">NAD(P)H:quinone oxidoreductase</fullName>
        <shortName evidence="1">NQO</shortName>
    </alternativeName>
</protein>
<name>NQOR_ACIET</name>
<proteinExistence type="inferred from homology"/>
<comment type="catalytic activity">
    <reaction evidence="1">
        <text>a quinone + NADH + H(+) = a quinol + NAD(+)</text>
        <dbReference type="Rhea" id="RHEA:46160"/>
        <dbReference type="ChEBI" id="CHEBI:15378"/>
        <dbReference type="ChEBI" id="CHEBI:24646"/>
        <dbReference type="ChEBI" id="CHEBI:57540"/>
        <dbReference type="ChEBI" id="CHEBI:57945"/>
        <dbReference type="ChEBI" id="CHEBI:132124"/>
        <dbReference type="EC" id="1.6.5.2"/>
    </reaction>
</comment>
<comment type="catalytic activity">
    <reaction evidence="1">
        <text>a quinone + NADPH + H(+) = a quinol + NADP(+)</text>
        <dbReference type="Rhea" id="RHEA:46164"/>
        <dbReference type="ChEBI" id="CHEBI:15378"/>
        <dbReference type="ChEBI" id="CHEBI:24646"/>
        <dbReference type="ChEBI" id="CHEBI:57783"/>
        <dbReference type="ChEBI" id="CHEBI:58349"/>
        <dbReference type="ChEBI" id="CHEBI:132124"/>
        <dbReference type="EC" id="1.6.5.2"/>
    </reaction>
</comment>
<comment type="cofactor">
    <cofactor evidence="1">
        <name>FMN</name>
        <dbReference type="ChEBI" id="CHEBI:58210"/>
    </cofactor>
    <text evidence="1">Binds 1 FMN per monomer.</text>
</comment>
<comment type="similarity">
    <text evidence="1">Belongs to the WrbA family.</text>
</comment>
<dbReference type="EC" id="1.6.5.2" evidence="1"/>
<dbReference type="EMBL" id="CP001392">
    <property type="protein sequence ID" value="ACM31546.1"/>
    <property type="molecule type" value="Genomic_DNA"/>
</dbReference>
<dbReference type="RefSeq" id="WP_012655173.1">
    <property type="nucleotide sequence ID" value="NC_011992.1"/>
</dbReference>
<dbReference type="SMR" id="B9M9X5"/>
<dbReference type="KEGG" id="dia:Dtpsy_0057"/>
<dbReference type="eggNOG" id="COG0655">
    <property type="taxonomic scope" value="Bacteria"/>
</dbReference>
<dbReference type="HOGENOM" id="CLU_051402_0_2_4"/>
<dbReference type="Proteomes" id="UP000000450">
    <property type="component" value="Chromosome"/>
</dbReference>
<dbReference type="GO" id="GO:0016020">
    <property type="term" value="C:membrane"/>
    <property type="evidence" value="ECO:0007669"/>
    <property type="project" value="TreeGrafter"/>
</dbReference>
<dbReference type="GO" id="GO:0050660">
    <property type="term" value="F:flavin adenine dinucleotide binding"/>
    <property type="evidence" value="ECO:0007669"/>
    <property type="project" value="UniProtKB-UniRule"/>
</dbReference>
<dbReference type="GO" id="GO:0010181">
    <property type="term" value="F:FMN binding"/>
    <property type="evidence" value="ECO:0007669"/>
    <property type="project" value="InterPro"/>
</dbReference>
<dbReference type="GO" id="GO:0051287">
    <property type="term" value="F:NAD binding"/>
    <property type="evidence" value="ECO:0007669"/>
    <property type="project" value="UniProtKB-UniRule"/>
</dbReference>
<dbReference type="GO" id="GO:0050136">
    <property type="term" value="F:NADH:ubiquinone reductase (non-electrogenic) activity"/>
    <property type="evidence" value="ECO:0007669"/>
    <property type="project" value="RHEA"/>
</dbReference>
<dbReference type="GO" id="GO:0050661">
    <property type="term" value="F:NADP binding"/>
    <property type="evidence" value="ECO:0007669"/>
    <property type="project" value="UniProtKB-UniRule"/>
</dbReference>
<dbReference type="GO" id="GO:0008753">
    <property type="term" value="F:NADPH dehydrogenase (quinone) activity"/>
    <property type="evidence" value="ECO:0007669"/>
    <property type="project" value="RHEA"/>
</dbReference>
<dbReference type="FunFam" id="3.40.50.360:FF:000001">
    <property type="entry name" value="NAD(P)H dehydrogenase (Quinone) FQR1-like"/>
    <property type="match status" value="1"/>
</dbReference>
<dbReference type="Gene3D" id="3.40.50.360">
    <property type="match status" value="1"/>
</dbReference>
<dbReference type="HAMAP" id="MF_01017">
    <property type="entry name" value="NQOR"/>
    <property type="match status" value="1"/>
</dbReference>
<dbReference type="InterPro" id="IPR008254">
    <property type="entry name" value="Flavodoxin/NO_synth"/>
</dbReference>
<dbReference type="InterPro" id="IPR029039">
    <property type="entry name" value="Flavoprotein-like_sf"/>
</dbReference>
<dbReference type="InterPro" id="IPR010089">
    <property type="entry name" value="Flavoprotein_WrbA-like"/>
</dbReference>
<dbReference type="InterPro" id="IPR005025">
    <property type="entry name" value="FMN_Rdtase-like_dom"/>
</dbReference>
<dbReference type="InterPro" id="IPR037513">
    <property type="entry name" value="NQO"/>
</dbReference>
<dbReference type="NCBIfam" id="TIGR01755">
    <property type="entry name" value="flav_wrbA"/>
    <property type="match status" value="1"/>
</dbReference>
<dbReference type="NCBIfam" id="NF002999">
    <property type="entry name" value="PRK03767.1"/>
    <property type="match status" value="1"/>
</dbReference>
<dbReference type="PANTHER" id="PTHR30546">
    <property type="entry name" value="FLAVODOXIN-RELATED PROTEIN WRBA-RELATED"/>
    <property type="match status" value="1"/>
</dbReference>
<dbReference type="PANTHER" id="PTHR30546:SF23">
    <property type="entry name" value="FLAVOPROTEIN-LIKE PROTEIN YCP4-RELATED"/>
    <property type="match status" value="1"/>
</dbReference>
<dbReference type="Pfam" id="PF03358">
    <property type="entry name" value="FMN_red"/>
    <property type="match status" value="1"/>
</dbReference>
<dbReference type="SUPFAM" id="SSF52218">
    <property type="entry name" value="Flavoproteins"/>
    <property type="match status" value="1"/>
</dbReference>
<dbReference type="PROSITE" id="PS50902">
    <property type="entry name" value="FLAVODOXIN_LIKE"/>
    <property type="match status" value="1"/>
</dbReference>
<feature type="chain" id="PRO_1000149007" description="NAD(P)H dehydrogenase (quinone)">
    <location>
        <begin position="1"/>
        <end position="200"/>
    </location>
</feature>
<feature type="domain" description="Flavodoxin-like" evidence="1">
    <location>
        <begin position="4"/>
        <end position="190"/>
    </location>
</feature>
<feature type="binding site" evidence="1">
    <location>
        <begin position="10"/>
        <end position="15"/>
    </location>
    <ligand>
        <name>FMN</name>
        <dbReference type="ChEBI" id="CHEBI:58210"/>
    </ligand>
</feature>
<feature type="binding site" evidence="1">
    <location>
        <position position="12"/>
    </location>
    <ligand>
        <name>NAD(+)</name>
        <dbReference type="ChEBI" id="CHEBI:57540"/>
    </ligand>
</feature>
<feature type="binding site" evidence="1">
    <location>
        <begin position="78"/>
        <end position="80"/>
    </location>
    <ligand>
        <name>FMN</name>
        <dbReference type="ChEBI" id="CHEBI:58210"/>
    </ligand>
</feature>
<feature type="binding site" evidence="1">
    <location>
        <position position="98"/>
    </location>
    <ligand>
        <name>substrate</name>
    </ligand>
</feature>
<feature type="binding site" evidence="1">
    <location>
        <begin position="113"/>
        <end position="119"/>
    </location>
    <ligand>
        <name>FMN</name>
        <dbReference type="ChEBI" id="CHEBI:58210"/>
    </ligand>
</feature>
<feature type="binding site" evidence="1">
    <location>
        <position position="134"/>
    </location>
    <ligand>
        <name>FMN</name>
        <dbReference type="ChEBI" id="CHEBI:58210"/>
    </ligand>
</feature>
<reference key="1">
    <citation type="submission" date="2009-01" db="EMBL/GenBank/DDBJ databases">
        <title>Complete sequence of Diaphorobacter sp. TPSY.</title>
        <authorList>
            <consortium name="US DOE Joint Genome Institute"/>
            <person name="Lucas S."/>
            <person name="Copeland A."/>
            <person name="Lapidus A."/>
            <person name="Glavina del Rio T."/>
            <person name="Tice H."/>
            <person name="Bruce D."/>
            <person name="Goodwin L."/>
            <person name="Pitluck S."/>
            <person name="Chertkov O."/>
            <person name="Brettin T."/>
            <person name="Detter J.C."/>
            <person name="Han C."/>
            <person name="Larimer F."/>
            <person name="Land M."/>
            <person name="Hauser L."/>
            <person name="Kyrpides N."/>
            <person name="Mikhailova N."/>
            <person name="Coates J.D."/>
        </authorList>
    </citation>
    <scope>NUCLEOTIDE SEQUENCE [LARGE SCALE GENOMIC DNA]</scope>
    <source>
        <strain>TPSY</strain>
    </source>
</reference>